<feature type="chain" id="PRO_0000132685" description="Small ribosomal subunit protein uS4m">
    <location>
        <begin position="1"/>
        <end position="196"/>
    </location>
</feature>
<feature type="domain" description="S4 RNA-binding" evidence="1">
    <location>
        <begin position="88"/>
        <end position="154"/>
    </location>
</feature>
<comment type="subcellular location">
    <subcellularLocation>
        <location>Mitochondrion</location>
    </subcellularLocation>
</comment>
<comment type="similarity">
    <text evidence="2">Belongs to the universal ribosomal protein uS4 family.</text>
</comment>
<name>RT04_MARPO</name>
<dbReference type="EMBL" id="M68929">
    <property type="protein sequence ID" value="AAC09458.1"/>
    <property type="molecule type" value="Genomic_DNA"/>
</dbReference>
<dbReference type="PIR" id="S26005">
    <property type="entry name" value="S26005"/>
</dbReference>
<dbReference type="RefSeq" id="NP_054461.1">
    <property type="nucleotide sequence ID" value="NC_001660.1"/>
</dbReference>
<dbReference type="SMR" id="P26866"/>
<dbReference type="GeneID" id="2702623"/>
<dbReference type="GO" id="GO:0005739">
    <property type="term" value="C:mitochondrion"/>
    <property type="evidence" value="ECO:0007669"/>
    <property type="project" value="UniProtKB-SubCell"/>
</dbReference>
<dbReference type="GO" id="GO:0015935">
    <property type="term" value="C:small ribosomal subunit"/>
    <property type="evidence" value="ECO:0007669"/>
    <property type="project" value="InterPro"/>
</dbReference>
<dbReference type="GO" id="GO:0019843">
    <property type="term" value="F:rRNA binding"/>
    <property type="evidence" value="ECO:0007669"/>
    <property type="project" value="UniProtKB-KW"/>
</dbReference>
<dbReference type="GO" id="GO:0003735">
    <property type="term" value="F:structural constituent of ribosome"/>
    <property type="evidence" value="ECO:0007669"/>
    <property type="project" value="InterPro"/>
</dbReference>
<dbReference type="GO" id="GO:0006412">
    <property type="term" value="P:translation"/>
    <property type="evidence" value="ECO:0007669"/>
    <property type="project" value="InterPro"/>
</dbReference>
<dbReference type="CDD" id="cd00165">
    <property type="entry name" value="S4"/>
    <property type="match status" value="1"/>
</dbReference>
<dbReference type="FunFam" id="3.10.290.10:FF:000001">
    <property type="entry name" value="30S ribosomal protein S4"/>
    <property type="match status" value="1"/>
</dbReference>
<dbReference type="Gene3D" id="1.10.1050.10">
    <property type="entry name" value="Ribosomal Protein S4 Delta 41, Chain A, domain 1"/>
    <property type="match status" value="1"/>
</dbReference>
<dbReference type="Gene3D" id="3.10.290.10">
    <property type="entry name" value="RNA-binding S4 domain"/>
    <property type="match status" value="1"/>
</dbReference>
<dbReference type="InterPro" id="IPR022801">
    <property type="entry name" value="Ribosomal_uS4"/>
</dbReference>
<dbReference type="InterPro" id="IPR005709">
    <property type="entry name" value="Ribosomal_uS4_bac-type"/>
</dbReference>
<dbReference type="InterPro" id="IPR018079">
    <property type="entry name" value="Ribosomal_uS4_CS"/>
</dbReference>
<dbReference type="InterPro" id="IPR002942">
    <property type="entry name" value="S4_RNA-bd"/>
</dbReference>
<dbReference type="InterPro" id="IPR036986">
    <property type="entry name" value="S4_RNA-bd_sf"/>
</dbReference>
<dbReference type="NCBIfam" id="TIGR01017">
    <property type="entry name" value="rpsD_bact"/>
    <property type="match status" value="1"/>
</dbReference>
<dbReference type="PANTHER" id="PTHR11831">
    <property type="entry name" value="30S 40S RIBOSOMAL PROTEIN"/>
    <property type="match status" value="1"/>
</dbReference>
<dbReference type="PANTHER" id="PTHR11831:SF30">
    <property type="entry name" value="SMALL RIBOSOMAL SUBUNIT PROTEIN US4M"/>
    <property type="match status" value="1"/>
</dbReference>
<dbReference type="Pfam" id="PF01479">
    <property type="entry name" value="S4"/>
    <property type="match status" value="1"/>
</dbReference>
<dbReference type="SMART" id="SM00363">
    <property type="entry name" value="S4"/>
    <property type="match status" value="1"/>
</dbReference>
<dbReference type="SUPFAM" id="SSF55174">
    <property type="entry name" value="Alpha-L RNA-binding motif"/>
    <property type="match status" value="1"/>
</dbReference>
<dbReference type="PROSITE" id="PS00632">
    <property type="entry name" value="RIBOSOMAL_S4"/>
    <property type="match status" value="1"/>
</dbReference>
<dbReference type="PROSITE" id="PS50889">
    <property type="entry name" value="S4"/>
    <property type="match status" value="1"/>
</dbReference>
<evidence type="ECO:0000255" key="1">
    <source>
        <dbReference type="PROSITE-ProRule" id="PRU00182"/>
    </source>
</evidence>
<evidence type="ECO:0000305" key="2"/>
<geneLocation type="mitochondrion"/>
<proteinExistence type="inferred from homology"/>
<protein>
    <recommendedName>
        <fullName evidence="2">Small ribosomal subunit protein uS4m</fullName>
    </recommendedName>
    <alternativeName>
        <fullName>Ribosomal protein S4, mitochondrial</fullName>
    </alternativeName>
</protein>
<sequence>MFASRFKVCRQILENVWQTKKLTLKQKFLISELQKQKKNKKQSDFSIQLQTIKKLSLFYGNLPIKKMQRAKTHTYIDKKNSLLFNIEKRLDVILVRLNFCSTMFQARQLISHKNICVNYKKVNIPGFQVSNGDLISIQENSLDFFKSNIRKNFQTNRIRRMKPNHLEVNYKTLKAVVLYEPQQIQFPYKIDLDLLD</sequence>
<accession>P26866</accession>
<gene>
    <name type="primary">RPS4</name>
</gene>
<reference key="1">
    <citation type="journal article" date="1992" name="J. Mol. Biol.">
        <title>Gene organization deduced from the complete sequence of liverwort Marchantia polymorpha mitochondrial DNA. A primitive form of plant mitochondrial genome.</title>
        <authorList>
            <person name="Oda K."/>
            <person name="Yamato K."/>
            <person name="Ohta E."/>
            <person name="Nakamura Y."/>
            <person name="Takemura M."/>
            <person name="Nozato N."/>
            <person name="Akashi K."/>
            <person name="Kanegae T."/>
            <person name="Ogura Y."/>
            <person name="Kohchi T."/>
            <person name="Ohyama K."/>
        </authorList>
    </citation>
    <scope>NUCLEOTIDE SEQUENCE [GENOMIC DNA]</scope>
</reference>
<reference key="2">
    <citation type="journal article" date="1992" name="Nucleic Acids Res.">
        <title>Gene clusters for ribosomal proteins in the mitochondrial genome of a liverwort, Marchantia polymorpha.</title>
        <authorList>
            <person name="Takemura M."/>
            <person name="Oda K."/>
            <person name="Yamato K."/>
            <person name="Ohta E."/>
            <person name="Nakamura Y."/>
            <person name="Nozato N."/>
            <person name="Akashi K."/>
            <person name="Ohyama K."/>
        </authorList>
    </citation>
    <scope>NUCLEOTIDE SEQUENCE [GENOMIC DNA]</scope>
</reference>
<keyword id="KW-0496">Mitochondrion</keyword>
<keyword id="KW-0687">Ribonucleoprotein</keyword>
<keyword id="KW-0689">Ribosomal protein</keyword>
<keyword id="KW-0694">RNA-binding</keyword>
<keyword id="KW-0699">rRNA-binding</keyword>
<organism>
    <name type="scientific">Marchantia polymorpha</name>
    <name type="common">Common liverwort</name>
    <name type="synonym">Marchantia aquatica</name>
    <dbReference type="NCBI Taxonomy" id="3197"/>
    <lineage>
        <taxon>Eukaryota</taxon>
        <taxon>Viridiplantae</taxon>
        <taxon>Streptophyta</taxon>
        <taxon>Embryophyta</taxon>
        <taxon>Marchantiophyta</taxon>
        <taxon>Marchantiopsida</taxon>
        <taxon>Marchantiidae</taxon>
        <taxon>Marchantiales</taxon>
        <taxon>Marchantiaceae</taxon>
        <taxon>Marchantia</taxon>
    </lineage>
</organism>